<organism>
    <name type="scientific">Mus musculus</name>
    <name type="common">Mouse</name>
    <dbReference type="NCBI Taxonomy" id="10090"/>
    <lineage>
        <taxon>Eukaryota</taxon>
        <taxon>Metazoa</taxon>
        <taxon>Chordata</taxon>
        <taxon>Craniata</taxon>
        <taxon>Vertebrata</taxon>
        <taxon>Euteleostomi</taxon>
        <taxon>Mammalia</taxon>
        <taxon>Eutheria</taxon>
        <taxon>Euarchontoglires</taxon>
        <taxon>Glires</taxon>
        <taxon>Rodentia</taxon>
        <taxon>Myomorpha</taxon>
        <taxon>Muroidea</taxon>
        <taxon>Muridae</taxon>
        <taxon>Murinae</taxon>
        <taxon>Mus</taxon>
        <taxon>Mus</taxon>
    </lineage>
</organism>
<dbReference type="EMBL" id="AK136572">
    <property type="protein sequence ID" value="BAE23054.1"/>
    <property type="molecule type" value="mRNA"/>
</dbReference>
<dbReference type="EMBL" id="AK144452">
    <property type="protein sequence ID" value="BAE25896.1"/>
    <property type="molecule type" value="mRNA"/>
</dbReference>
<dbReference type="EMBL" id="AK160483">
    <property type="protein sequence ID" value="BAE35814.1"/>
    <property type="molecule type" value="mRNA"/>
</dbReference>
<dbReference type="EMBL" id="BC005556">
    <property type="protein sequence ID" value="AAH05556.1"/>
    <property type="molecule type" value="mRNA"/>
</dbReference>
<dbReference type="CCDS" id="CCDS16870.1"/>
<dbReference type="RefSeq" id="NP_663510.1">
    <property type="nucleotide sequence ID" value="NM_145535.2"/>
</dbReference>
<dbReference type="RefSeq" id="XP_006499367.1">
    <property type="nucleotide sequence ID" value="XM_006499304.4"/>
</dbReference>
<dbReference type="RefSeq" id="XP_006499368.1">
    <property type="nucleotide sequence ID" value="XM_006499305.3"/>
</dbReference>
<dbReference type="RefSeq" id="XP_036017333.1">
    <property type="nucleotide sequence ID" value="XM_036161440.1"/>
</dbReference>
<dbReference type="SMR" id="Q99JZ0"/>
<dbReference type="FunCoup" id="Q99JZ0">
    <property type="interactions" value="509"/>
</dbReference>
<dbReference type="MINT" id="Q99JZ0"/>
<dbReference type="STRING" id="10090.ENSMUSP00000028950"/>
<dbReference type="PhosphoSitePlus" id="Q99JZ0"/>
<dbReference type="PaxDb" id="10090-ENSMUSP00000028950"/>
<dbReference type="ProteomicsDB" id="256758"/>
<dbReference type="Antibodypedia" id="23059">
    <property type="antibodies" value="244 antibodies from 29 providers"/>
</dbReference>
<dbReference type="DNASU" id="228765"/>
<dbReference type="Ensembl" id="ENSMUST00000028950.9">
    <property type="protein sequence ID" value="ENSMUSP00000028950.9"/>
    <property type="gene ID" value="ENSMUSG00000027456.9"/>
</dbReference>
<dbReference type="GeneID" id="228765"/>
<dbReference type="KEGG" id="mmu:228765"/>
<dbReference type="UCSC" id="uc008nec.2">
    <property type="organism name" value="mouse"/>
</dbReference>
<dbReference type="AGR" id="MGI:2385156"/>
<dbReference type="CTD" id="27111"/>
<dbReference type="MGI" id="MGI:2385156">
    <property type="gene designation" value="Sdcbp2"/>
</dbReference>
<dbReference type="VEuPathDB" id="HostDB:ENSMUSG00000027456"/>
<dbReference type="eggNOG" id="ENOG502S0HE">
    <property type="taxonomic scope" value="Eukaryota"/>
</dbReference>
<dbReference type="GeneTree" id="ENSGT00940000161179"/>
<dbReference type="HOGENOM" id="CLU_059870_0_0_1"/>
<dbReference type="InParanoid" id="Q99JZ0"/>
<dbReference type="OMA" id="HIGFVIK"/>
<dbReference type="OrthoDB" id="10059177at2759"/>
<dbReference type="PhylomeDB" id="Q99JZ0"/>
<dbReference type="TreeFam" id="TF327131"/>
<dbReference type="BioGRID-ORCS" id="228765">
    <property type="hits" value="3 hits in 77 CRISPR screens"/>
</dbReference>
<dbReference type="ChiTaRS" id="Trappc4">
    <property type="organism name" value="mouse"/>
</dbReference>
<dbReference type="PRO" id="PR:Q99JZ0"/>
<dbReference type="Proteomes" id="UP000000589">
    <property type="component" value="Chromosome 2"/>
</dbReference>
<dbReference type="RNAct" id="Q99JZ0">
    <property type="molecule type" value="protein"/>
</dbReference>
<dbReference type="Bgee" id="ENSMUSG00000027456">
    <property type="expression patterns" value="Expressed in right colon and 117 other cell types or tissues"/>
</dbReference>
<dbReference type="GO" id="GO:0005737">
    <property type="term" value="C:cytoplasm"/>
    <property type="evidence" value="ECO:0000250"/>
    <property type="project" value="UniProtKB"/>
</dbReference>
<dbReference type="GO" id="GO:0005829">
    <property type="term" value="C:cytosol"/>
    <property type="evidence" value="ECO:0007669"/>
    <property type="project" value="Ensembl"/>
</dbReference>
<dbReference type="GO" id="GO:0005794">
    <property type="term" value="C:Golgi apparatus"/>
    <property type="evidence" value="ECO:0007669"/>
    <property type="project" value="Ensembl"/>
</dbReference>
<dbReference type="GO" id="GO:0016607">
    <property type="term" value="C:nuclear speck"/>
    <property type="evidence" value="ECO:0000250"/>
    <property type="project" value="UniProtKB"/>
</dbReference>
<dbReference type="GO" id="GO:0005730">
    <property type="term" value="C:nucleolus"/>
    <property type="evidence" value="ECO:0000250"/>
    <property type="project" value="UniProtKB"/>
</dbReference>
<dbReference type="GO" id="GO:0005886">
    <property type="term" value="C:plasma membrane"/>
    <property type="evidence" value="ECO:0000250"/>
    <property type="project" value="UniProtKB"/>
</dbReference>
<dbReference type="GO" id="GO:0005546">
    <property type="term" value="F:phosphatidylinositol-4,5-bisphosphate binding"/>
    <property type="evidence" value="ECO:0000250"/>
    <property type="project" value="UniProtKB"/>
</dbReference>
<dbReference type="GO" id="GO:0046982">
    <property type="term" value="F:protein heterodimerization activity"/>
    <property type="evidence" value="ECO:0000250"/>
    <property type="project" value="UniProtKB"/>
</dbReference>
<dbReference type="GO" id="GO:0042803">
    <property type="term" value="F:protein homodimerization activity"/>
    <property type="evidence" value="ECO:0000250"/>
    <property type="project" value="UniProtKB"/>
</dbReference>
<dbReference type="GO" id="GO:0008283">
    <property type="term" value="P:cell population proliferation"/>
    <property type="evidence" value="ECO:0007669"/>
    <property type="project" value="Ensembl"/>
</dbReference>
<dbReference type="CDD" id="cd06721">
    <property type="entry name" value="PDZ1_syntenin-like"/>
    <property type="match status" value="1"/>
</dbReference>
<dbReference type="CDD" id="cd06794">
    <property type="entry name" value="PDZ2_syntenin-like"/>
    <property type="match status" value="1"/>
</dbReference>
<dbReference type="FunFam" id="2.30.42.10:FF:000043">
    <property type="entry name" value="Syntenin-1 isoform X1"/>
    <property type="match status" value="1"/>
</dbReference>
<dbReference type="FunFam" id="2.30.42.10:FF:000065">
    <property type="entry name" value="syntenin-1 isoform X1"/>
    <property type="match status" value="1"/>
</dbReference>
<dbReference type="Gene3D" id="2.30.42.10">
    <property type="match status" value="2"/>
</dbReference>
<dbReference type="InterPro" id="IPR051230">
    <property type="entry name" value="APP-Binding"/>
</dbReference>
<dbReference type="InterPro" id="IPR001478">
    <property type="entry name" value="PDZ"/>
</dbReference>
<dbReference type="InterPro" id="IPR036034">
    <property type="entry name" value="PDZ_sf"/>
</dbReference>
<dbReference type="PANTHER" id="PTHR12345">
    <property type="entry name" value="SYNTENIN RELATED"/>
    <property type="match status" value="1"/>
</dbReference>
<dbReference type="PANTHER" id="PTHR12345:SF13">
    <property type="entry name" value="SYNTENIN-2"/>
    <property type="match status" value="1"/>
</dbReference>
<dbReference type="Pfam" id="PF00595">
    <property type="entry name" value="PDZ"/>
    <property type="match status" value="2"/>
</dbReference>
<dbReference type="SMART" id="SM00228">
    <property type="entry name" value="PDZ"/>
    <property type="match status" value="2"/>
</dbReference>
<dbReference type="SUPFAM" id="SSF50156">
    <property type="entry name" value="PDZ domain-like"/>
    <property type="match status" value="2"/>
</dbReference>
<dbReference type="PROSITE" id="PS50106">
    <property type="entry name" value="PDZ"/>
    <property type="match status" value="2"/>
</dbReference>
<protein>
    <recommendedName>
        <fullName>Syntenin-2</fullName>
    </recommendedName>
    <alternativeName>
        <fullName>Syndecan-binding protein 2</fullName>
    </alternativeName>
</protein>
<sequence length="292" mass="31565">MSVLYPSLEDLKVGQVIQAQGRASPTMPTLPAPMASAPPLSELYPNLAELESYMGLSLSSQEVQKNLTQIPDSDNMVVTSPGPGQVVAPVSGNNLGILRAEIKPGVREIHLCKDERGKTGLRLQAVDKGLFVQLVQANTPASLVGLRFGDQILQIDGCDCAGWNTHKAHKVLKKASAEKIVMVIRDRPFQRTVTMHKDSSGQVGFSIKKGKIVSVVKGSSAARNGLLTNHYVCEVNGQNVIGLKDKKVTEILTTAGDVITLTIIPTVIYEHMIKRLSPLLLHHTMDHSIPDT</sequence>
<proteinExistence type="evidence at transcript level"/>
<evidence type="ECO:0000250" key="1">
    <source>
        <dbReference type="UniProtKB" id="Q9H190"/>
    </source>
</evidence>
<evidence type="ECO:0000255" key="2">
    <source>
        <dbReference type="PROSITE-ProRule" id="PRU00143"/>
    </source>
</evidence>
<evidence type="ECO:0000312" key="3">
    <source>
        <dbReference type="EMBL" id="BAE23054.1"/>
    </source>
</evidence>
<evidence type="ECO:0000312" key="4">
    <source>
        <dbReference type="EMBL" id="BAE25896.1"/>
    </source>
</evidence>
<evidence type="ECO:0000312" key="5">
    <source>
        <dbReference type="EMBL" id="BAE35814.1"/>
    </source>
</evidence>
<feature type="chain" id="PRO_0000184005" description="Syntenin-2">
    <location>
        <begin position="1"/>
        <end position="292"/>
    </location>
</feature>
<feature type="domain" description="PDZ 1" evidence="2">
    <location>
        <begin position="108"/>
        <end position="187"/>
    </location>
</feature>
<feature type="domain" description="PDZ 2" evidence="2">
    <location>
        <begin position="192"/>
        <end position="267"/>
    </location>
</feature>
<gene>
    <name type="primary">Sdcbp2</name>
</gene>
<name>SDCB2_MOUSE</name>
<comment type="function">
    <text evidence="1">Binds phosphatidylinositol 4,5-bisphosphate (PIP2). May play a role in the organization of nuclear PIP2, cell division and cell survival.</text>
</comment>
<comment type="subunit">
    <text evidence="1">Monomer and homodimer. Interacts with SDCBP. Interacts with TM4SF1.</text>
</comment>
<comment type="subcellular location">
    <subcellularLocation>
        <location evidence="1">Cytoplasm</location>
    </subcellularLocation>
    <subcellularLocation>
        <location evidence="1">Nucleus</location>
        <location evidence="1">Nucleolus</location>
    </subcellularLocation>
    <subcellularLocation>
        <location evidence="1">Nucleus</location>
        <location evidence="1">Nucleoplasm</location>
    </subcellularLocation>
    <subcellularLocation>
        <location evidence="1">Cell membrane</location>
    </subcellularLocation>
    <subcellularLocation>
        <location evidence="1">Nucleus speckle</location>
    </subcellularLocation>
    <text evidence="1">Associates with intracellular membranes and enriched in the apical region of the cell and in intracellular compartments. Colocalizes with TM4SF1 in the apical region of the cell. Predominantly targeted to nuclear PIP2 pools. Shuttles between several subcellular compartments. PIP2 plays an important role in the distribution of SDCBP2.</text>
</comment>
<comment type="domain">
    <text evidence="1">The two PDZ domains mediate the interaction with phosphatidylinositol 4,5-bisphosphate (PIP2) and target SDCBP2 to the plasma membranes and nucleoli, PIP2-rich regions.</text>
</comment>
<accession>Q99JZ0</accession>
<accession>Q3UN51</accession>
<reference key="1">
    <citation type="journal article" date="2005" name="Science">
        <title>The transcriptional landscape of the mammalian genome.</title>
        <authorList>
            <person name="Carninci P."/>
            <person name="Kasukawa T."/>
            <person name="Katayama S."/>
            <person name="Gough J."/>
            <person name="Frith M.C."/>
            <person name="Maeda N."/>
            <person name="Oyama R."/>
            <person name="Ravasi T."/>
            <person name="Lenhard B."/>
            <person name="Wells C."/>
            <person name="Kodzius R."/>
            <person name="Shimokawa K."/>
            <person name="Bajic V.B."/>
            <person name="Brenner S.E."/>
            <person name="Batalov S."/>
            <person name="Forrest A.R."/>
            <person name="Zavolan M."/>
            <person name="Davis M.J."/>
            <person name="Wilming L.G."/>
            <person name="Aidinis V."/>
            <person name="Allen J.E."/>
            <person name="Ambesi-Impiombato A."/>
            <person name="Apweiler R."/>
            <person name="Aturaliya R.N."/>
            <person name="Bailey T.L."/>
            <person name="Bansal M."/>
            <person name="Baxter L."/>
            <person name="Beisel K.W."/>
            <person name="Bersano T."/>
            <person name="Bono H."/>
            <person name="Chalk A.M."/>
            <person name="Chiu K.P."/>
            <person name="Choudhary V."/>
            <person name="Christoffels A."/>
            <person name="Clutterbuck D.R."/>
            <person name="Crowe M.L."/>
            <person name="Dalla E."/>
            <person name="Dalrymple B.P."/>
            <person name="de Bono B."/>
            <person name="Della Gatta G."/>
            <person name="di Bernardo D."/>
            <person name="Down T."/>
            <person name="Engstrom P."/>
            <person name="Fagiolini M."/>
            <person name="Faulkner G."/>
            <person name="Fletcher C.F."/>
            <person name="Fukushima T."/>
            <person name="Furuno M."/>
            <person name="Futaki S."/>
            <person name="Gariboldi M."/>
            <person name="Georgii-Hemming P."/>
            <person name="Gingeras T.R."/>
            <person name="Gojobori T."/>
            <person name="Green R.E."/>
            <person name="Gustincich S."/>
            <person name="Harbers M."/>
            <person name="Hayashi Y."/>
            <person name="Hensch T.K."/>
            <person name="Hirokawa N."/>
            <person name="Hill D."/>
            <person name="Huminiecki L."/>
            <person name="Iacono M."/>
            <person name="Ikeo K."/>
            <person name="Iwama A."/>
            <person name="Ishikawa T."/>
            <person name="Jakt M."/>
            <person name="Kanapin A."/>
            <person name="Katoh M."/>
            <person name="Kawasawa Y."/>
            <person name="Kelso J."/>
            <person name="Kitamura H."/>
            <person name="Kitano H."/>
            <person name="Kollias G."/>
            <person name="Krishnan S.P."/>
            <person name="Kruger A."/>
            <person name="Kummerfeld S.K."/>
            <person name="Kurochkin I.V."/>
            <person name="Lareau L.F."/>
            <person name="Lazarevic D."/>
            <person name="Lipovich L."/>
            <person name="Liu J."/>
            <person name="Liuni S."/>
            <person name="McWilliam S."/>
            <person name="Madan Babu M."/>
            <person name="Madera M."/>
            <person name="Marchionni L."/>
            <person name="Matsuda H."/>
            <person name="Matsuzawa S."/>
            <person name="Miki H."/>
            <person name="Mignone F."/>
            <person name="Miyake S."/>
            <person name="Morris K."/>
            <person name="Mottagui-Tabar S."/>
            <person name="Mulder N."/>
            <person name="Nakano N."/>
            <person name="Nakauchi H."/>
            <person name="Ng P."/>
            <person name="Nilsson R."/>
            <person name="Nishiguchi S."/>
            <person name="Nishikawa S."/>
            <person name="Nori F."/>
            <person name="Ohara O."/>
            <person name="Okazaki Y."/>
            <person name="Orlando V."/>
            <person name="Pang K.C."/>
            <person name="Pavan W.J."/>
            <person name="Pavesi G."/>
            <person name="Pesole G."/>
            <person name="Petrovsky N."/>
            <person name="Piazza S."/>
            <person name="Reed J."/>
            <person name="Reid J.F."/>
            <person name="Ring B.Z."/>
            <person name="Ringwald M."/>
            <person name="Rost B."/>
            <person name="Ruan Y."/>
            <person name="Salzberg S.L."/>
            <person name="Sandelin A."/>
            <person name="Schneider C."/>
            <person name="Schoenbach C."/>
            <person name="Sekiguchi K."/>
            <person name="Semple C.A."/>
            <person name="Seno S."/>
            <person name="Sessa L."/>
            <person name="Sheng Y."/>
            <person name="Shibata Y."/>
            <person name="Shimada H."/>
            <person name="Shimada K."/>
            <person name="Silva D."/>
            <person name="Sinclair B."/>
            <person name="Sperling S."/>
            <person name="Stupka E."/>
            <person name="Sugiura K."/>
            <person name="Sultana R."/>
            <person name="Takenaka Y."/>
            <person name="Taki K."/>
            <person name="Tammoja K."/>
            <person name="Tan S.L."/>
            <person name="Tang S."/>
            <person name="Taylor M.S."/>
            <person name="Tegner J."/>
            <person name="Teichmann S.A."/>
            <person name="Ueda H.R."/>
            <person name="van Nimwegen E."/>
            <person name="Verardo R."/>
            <person name="Wei C.L."/>
            <person name="Yagi K."/>
            <person name="Yamanishi H."/>
            <person name="Zabarovsky E."/>
            <person name="Zhu S."/>
            <person name="Zimmer A."/>
            <person name="Hide W."/>
            <person name="Bult C."/>
            <person name="Grimmond S.M."/>
            <person name="Teasdale R.D."/>
            <person name="Liu E.T."/>
            <person name="Brusic V."/>
            <person name="Quackenbush J."/>
            <person name="Wahlestedt C."/>
            <person name="Mattick J.S."/>
            <person name="Hume D.A."/>
            <person name="Kai C."/>
            <person name="Sasaki D."/>
            <person name="Tomaru Y."/>
            <person name="Fukuda S."/>
            <person name="Kanamori-Katayama M."/>
            <person name="Suzuki M."/>
            <person name="Aoki J."/>
            <person name="Arakawa T."/>
            <person name="Iida J."/>
            <person name="Imamura K."/>
            <person name="Itoh M."/>
            <person name="Kato T."/>
            <person name="Kawaji H."/>
            <person name="Kawagashira N."/>
            <person name="Kawashima T."/>
            <person name="Kojima M."/>
            <person name="Kondo S."/>
            <person name="Konno H."/>
            <person name="Nakano K."/>
            <person name="Ninomiya N."/>
            <person name="Nishio T."/>
            <person name="Okada M."/>
            <person name="Plessy C."/>
            <person name="Shibata K."/>
            <person name="Shiraki T."/>
            <person name="Suzuki S."/>
            <person name="Tagami M."/>
            <person name="Waki K."/>
            <person name="Watahiki A."/>
            <person name="Okamura-Oho Y."/>
            <person name="Suzuki H."/>
            <person name="Kawai J."/>
            <person name="Hayashizaki Y."/>
        </authorList>
    </citation>
    <scope>NUCLEOTIDE SEQUENCE [LARGE SCALE MRNA]</scope>
    <source>
        <strain>C57BL/6J</strain>
        <tissue evidence="3">Cecum</tissue>
        <tissue evidence="4">Gall bladder</tissue>
        <tissue evidence="5">Stomach</tissue>
    </source>
</reference>
<reference key="2">
    <citation type="journal article" date="2004" name="Genome Res.">
        <title>The status, quality, and expansion of the NIH full-length cDNA project: the Mammalian Gene Collection (MGC).</title>
        <authorList>
            <consortium name="The MGC Project Team"/>
        </authorList>
    </citation>
    <scope>NUCLEOTIDE SEQUENCE [LARGE SCALE MRNA]</scope>
</reference>
<keyword id="KW-1003">Cell membrane</keyword>
<keyword id="KW-0963">Cytoplasm</keyword>
<keyword id="KW-0446">Lipid-binding</keyword>
<keyword id="KW-0472">Membrane</keyword>
<keyword id="KW-0539">Nucleus</keyword>
<keyword id="KW-1185">Reference proteome</keyword>
<keyword id="KW-0677">Repeat</keyword>